<feature type="chain" id="PRO_0000303530" description="tRNA N6-adenosine threonylcarbamoyltransferase">
    <location>
        <begin position="1"/>
        <end position="334"/>
    </location>
</feature>
<feature type="binding site" evidence="1">
    <location>
        <position position="110"/>
    </location>
    <ligand>
        <name>Fe cation</name>
        <dbReference type="ChEBI" id="CHEBI:24875"/>
    </ligand>
</feature>
<feature type="binding site" evidence="1">
    <location>
        <position position="114"/>
    </location>
    <ligand>
        <name>Fe cation</name>
        <dbReference type="ChEBI" id="CHEBI:24875"/>
    </ligand>
</feature>
<feature type="binding site" evidence="1">
    <location>
        <begin position="133"/>
        <end position="137"/>
    </location>
    <ligand>
        <name>substrate</name>
    </ligand>
</feature>
<feature type="binding site" evidence="1">
    <location>
        <position position="166"/>
    </location>
    <ligand>
        <name>substrate</name>
    </ligand>
</feature>
<feature type="binding site" evidence="1">
    <location>
        <position position="179"/>
    </location>
    <ligand>
        <name>substrate</name>
    </ligand>
</feature>
<feature type="binding site" evidence="1">
    <location>
        <position position="183"/>
    </location>
    <ligand>
        <name>substrate</name>
    </ligand>
</feature>
<feature type="binding site" evidence="1">
    <location>
        <position position="275"/>
    </location>
    <ligand>
        <name>substrate</name>
    </ligand>
</feature>
<feature type="binding site" evidence="1">
    <location>
        <position position="303"/>
    </location>
    <ligand>
        <name>Fe cation</name>
        <dbReference type="ChEBI" id="CHEBI:24875"/>
    </ligand>
</feature>
<gene>
    <name evidence="1" type="primary">tsaD</name>
    <name type="synonym">gcp</name>
    <name type="ordered locus">SRU_2545</name>
</gene>
<sequence length="334" mass="35384">MLVLGIESSCDDTAAAVWDDGTVRSNVVSSQADLHEEYGGVVPELASRNHQRLIVPVVQRALAEADADARALDAIAGTYGPGLPGSLLVGLSFAKALAQGLDVPLIGVNHLEGHVYSVDLGPERPARPFLCLIVSGGHTELVHVGDDFQHDVLGRTRDDAAGEAFDKMAQLFGLGYPGGPDIDRHAESGAPTFHDFPRSRLDDFDFSFSGLKTSVLYYLRDRSDADRERLLDEHLDDLCASVRAAVVDVLVDAVRRAVEATGVGHVAVVGGVAANSALRRRMKALGDDEGVDVSVPDLAYCMDNAAMIAQAGARRLAAGHASPPTLDVHPSLQL</sequence>
<organism>
    <name type="scientific">Salinibacter ruber (strain DSM 13855 / M31)</name>
    <dbReference type="NCBI Taxonomy" id="309807"/>
    <lineage>
        <taxon>Bacteria</taxon>
        <taxon>Pseudomonadati</taxon>
        <taxon>Rhodothermota</taxon>
        <taxon>Rhodothermia</taxon>
        <taxon>Rhodothermales</taxon>
        <taxon>Salinibacteraceae</taxon>
        <taxon>Salinibacter</taxon>
    </lineage>
</organism>
<evidence type="ECO:0000255" key="1">
    <source>
        <dbReference type="HAMAP-Rule" id="MF_01445"/>
    </source>
</evidence>
<evidence type="ECO:0000305" key="2"/>
<comment type="function">
    <text evidence="1">Required for the formation of a threonylcarbamoyl group on adenosine at position 37 (t(6)A37) in tRNAs that read codons beginning with adenine. Is involved in the transfer of the threonylcarbamoyl moiety of threonylcarbamoyl-AMP (TC-AMP) to the N6 group of A37, together with TsaE and TsaB. TsaD likely plays a direct catalytic role in this reaction.</text>
</comment>
<comment type="catalytic activity">
    <reaction evidence="1">
        <text>L-threonylcarbamoyladenylate + adenosine(37) in tRNA = N(6)-L-threonylcarbamoyladenosine(37) in tRNA + AMP + H(+)</text>
        <dbReference type="Rhea" id="RHEA:37059"/>
        <dbReference type="Rhea" id="RHEA-COMP:10162"/>
        <dbReference type="Rhea" id="RHEA-COMP:10163"/>
        <dbReference type="ChEBI" id="CHEBI:15378"/>
        <dbReference type="ChEBI" id="CHEBI:73682"/>
        <dbReference type="ChEBI" id="CHEBI:74411"/>
        <dbReference type="ChEBI" id="CHEBI:74418"/>
        <dbReference type="ChEBI" id="CHEBI:456215"/>
        <dbReference type="EC" id="2.3.1.234"/>
    </reaction>
</comment>
<comment type="cofactor">
    <cofactor evidence="1">
        <name>Fe(2+)</name>
        <dbReference type="ChEBI" id="CHEBI:29033"/>
    </cofactor>
    <text evidence="1">Binds 1 Fe(2+) ion per subunit.</text>
</comment>
<comment type="subcellular location">
    <subcellularLocation>
        <location evidence="1">Cytoplasm</location>
    </subcellularLocation>
</comment>
<comment type="similarity">
    <text evidence="1">Belongs to the KAE1 / TsaD family.</text>
</comment>
<comment type="sequence caution" evidence="2">
    <conflict type="erroneous initiation">
        <sequence resource="EMBL-CDS" id="ABC45358"/>
    </conflict>
</comment>
<reference key="1">
    <citation type="journal article" date="2005" name="Proc. Natl. Acad. Sci. U.S.A.">
        <title>The genome of Salinibacter ruber: convergence and gene exchange among hyperhalophilic bacteria and archaea.</title>
        <authorList>
            <person name="Mongodin E.F."/>
            <person name="Nelson K.E."/>
            <person name="Daugherty S."/>
            <person name="DeBoy R.T."/>
            <person name="Wister J."/>
            <person name="Khouri H."/>
            <person name="Weidman J."/>
            <person name="Walsh D.A."/>
            <person name="Papke R.T."/>
            <person name="Sanchez Perez G."/>
            <person name="Sharma A.K."/>
            <person name="Nesbo C.L."/>
            <person name="MacLeod D."/>
            <person name="Bapteste E."/>
            <person name="Doolittle W.F."/>
            <person name="Charlebois R.L."/>
            <person name="Legault B."/>
            <person name="Rodriguez-Valera F."/>
        </authorList>
    </citation>
    <scope>NUCLEOTIDE SEQUENCE [LARGE SCALE GENOMIC DNA]</scope>
    <source>
        <strain>DSM 13855 / CECT 5946 / M31</strain>
    </source>
</reference>
<keyword id="KW-0012">Acyltransferase</keyword>
<keyword id="KW-0963">Cytoplasm</keyword>
<keyword id="KW-0408">Iron</keyword>
<keyword id="KW-0479">Metal-binding</keyword>
<keyword id="KW-1185">Reference proteome</keyword>
<keyword id="KW-0808">Transferase</keyword>
<keyword id="KW-0819">tRNA processing</keyword>
<dbReference type="EC" id="2.3.1.234" evidence="1"/>
<dbReference type="EMBL" id="CP000159">
    <property type="protein sequence ID" value="ABC45358.1"/>
    <property type="status" value="ALT_INIT"/>
    <property type="molecule type" value="Genomic_DNA"/>
</dbReference>
<dbReference type="RefSeq" id="WP_112904802.1">
    <property type="nucleotide sequence ID" value="NC_007677.1"/>
</dbReference>
<dbReference type="RefSeq" id="YP_446643.1">
    <property type="nucleotide sequence ID" value="NC_007677.1"/>
</dbReference>
<dbReference type="SMR" id="Q2RZI8"/>
<dbReference type="STRING" id="309807.SRU_2545"/>
<dbReference type="EnsemblBacteria" id="ABC45358">
    <property type="protein sequence ID" value="ABC45358"/>
    <property type="gene ID" value="SRU_2545"/>
</dbReference>
<dbReference type="GeneID" id="83729563"/>
<dbReference type="KEGG" id="sru:SRU_2545"/>
<dbReference type="PATRIC" id="fig|309807.25.peg.2652"/>
<dbReference type="eggNOG" id="COG0533">
    <property type="taxonomic scope" value="Bacteria"/>
</dbReference>
<dbReference type="HOGENOM" id="CLU_023208_0_2_10"/>
<dbReference type="OrthoDB" id="9806197at2"/>
<dbReference type="Proteomes" id="UP000008674">
    <property type="component" value="Chromosome"/>
</dbReference>
<dbReference type="GO" id="GO:0005737">
    <property type="term" value="C:cytoplasm"/>
    <property type="evidence" value="ECO:0007669"/>
    <property type="project" value="UniProtKB-SubCell"/>
</dbReference>
<dbReference type="GO" id="GO:0005506">
    <property type="term" value="F:iron ion binding"/>
    <property type="evidence" value="ECO:0007669"/>
    <property type="project" value="UniProtKB-UniRule"/>
</dbReference>
<dbReference type="GO" id="GO:0061711">
    <property type="term" value="F:N(6)-L-threonylcarbamoyladenine synthase activity"/>
    <property type="evidence" value="ECO:0007669"/>
    <property type="project" value="UniProtKB-EC"/>
</dbReference>
<dbReference type="GO" id="GO:0002949">
    <property type="term" value="P:tRNA threonylcarbamoyladenosine modification"/>
    <property type="evidence" value="ECO:0007669"/>
    <property type="project" value="UniProtKB-UniRule"/>
</dbReference>
<dbReference type="FunFam" id="3.30.420.40:FF:000012">
    <property type="entry name" value="tRNA N6-adenosine threonylcarbamoyltransferase"/>
    <property type="match status" value="1"/>
</dbReference>
<dbReference type="FunFam" id="3.30.420.40:FF:000040">
    <property type="entry name" value="tRNA N6-adenosine threonylcarbamoyltransferase"/>
    <property type="match status" value="1"/>
</dbReference>
<dbReference type="Gene3D" id="3.30.420.40">
    <property type="match status" value="2"/>
</dbReference>
<dbReference type="HAMAP" id="MF_01445">
    <property type="entry name" value="TsaD"/>
    <property type="match status" value="1"/>
</dbReference>
<dbReference type="InterPro" id="IPR043129">
    <property type="entry name" value="ATPase_NBD"/>
</dbReference>
<dbReference type="InterPro" id="IPR000905">
    <property type="entry name" value="Gcp-like_dom"/>
</dbReference>
<dbReference type="InterPro" id="IPR017861">
    <property type="entry name" value="KAE1/TsaD"/>
</dbReference>
<dbReference type="InterPro" id="IPR017860">
    <property type="entry name" value="Peptidase_M22_CS"/>
</dbReference>
<dbReference type="InterPro" id="IPR022450">
    <property type="entry name" value="TsaD"/>
</dbReference>
<dbReference type="NCBIfam" id="TIGR00329">
    <property type="entry name" value="gcp_kae1"/>
    <property type="match status" value="1"/>
</dbReference>
<dbReference type="NCBIfam" id="TIGR03723">
    <property type="entry name" value="T6A_TsaD_YgjD"/>
    <property type="match status" value="1"/>
</dbReference>
<dbReference type="PANTHER" id="PTHR11735">
    <property type="entry name" value="TRNA N6-ADENOSINE THREONYLCARBAMOYLTRANSFERASE"/>
    <property type="match status" value="1"/>
</dbReference>
<dbReference type="PANTHER" id="PTHR11735:SF6">
    <property type="entry name" value="TRNA N6-ADENOSINE THREONYLCARBAMOYLTRANSFERASE, MITOCHONDRIAL"/>
    <property type="match status" value="1"/>
</dbReference>
<dbReference type="Pfam" id="PF00814">
    <property type="entry name" value="TsaD"/>
    <property type="match status" value="1"/>
</dbReference>
<dbReference type="PRINTS" id="PR00789">
    <property type="entry name" value="OSIALOPTASE"/>
</dbReference>
<dbReference type="SUPFAM" id="SSF53067">
    <property type="entry name" value="Actin-like ATPase domain"/>
    <property type="match status" value="1"/>
</dbReference>
<dbReference type="PROSITE" id="PS01016">
    <property type="entry name" value="GLYCOPROTEASE"/>
    <property type="match status" value="1"/>
</dbReference>
<name>TSAD_SALRD</name>
<proteinExistence type="inferred from homology"/>
<accession>Q2RZI8</accession>
<protein>
    <recommendedName>
        <fullName evidence="1">tRNA N6-adenosine threonylcarbamoyltransferase</fullName>
        <ecNumber evidence="1">2.3.1.234</ecNumber>
    </recommendedName>
    <alternativeName>
        <fullName evidence="1">N6-L-threonylcarbamoyladenine synthase</fullName>
        <shortName evidence="1">t(6)A synthase</shortName>
    </alternativeName>
    <alternativeName>
        <fullName evidence="1">t(6)A37 threonylcarbamoyladenosine biosynthesis protein TsaD</fullName>
    </alternativeName>
    <alternativeName>
        <fullName evidence="1">tRNA threonylcarbamoyladenosine biosynthesis protein TsaD</fullName>
    </alternativeName>
</protein>